<comment type="function">
    <text evidence="1">Catalyzes the synthesis of activated sulfate.</text>
</comment>
<comment type="catalytic activity">
    <reaction evidence="1">
        <text>adenosine 5'-phosphosulfate + ATP = 3'-phosphoadenylyl sulfate + ADP + H(+)</text>
        <dbReference type="Rhea" id="RHEA:24152"/>
        <dbReference type="ChEBI" id="CHEBI:15378"/>
        <dbReference type="ChEBI" id="CHEBI:30616"/>
        <dbReference type="ChEBI" id="CHEBI:58243"/>
        <dbReference type="ChEBI" id="CHEBI:58339"/>
        <dbReference type="ChEBI" id="CHEBI:456216"/>
        <dbReference type="EC" id="2.7.1.25"/>
    </reaction>
</comment>
<comment type="pathway">
    <text evidence="1">Sulfur metabolism; hydrogen sulfide biosynthesis; sulfite from sulfate: step 2/3.</text>
</comment>
<comment type="similarity">
    <text evidence="1">Belongs to the APS kinase family.</text>
</comment>
<keyword id="KW-0067">ATP-binding</keyword>
<keyword id="KW-0418">Kinase</keyword>
<keyword id="KW-0547">Nucleotide-binding</keyword>
<keyword id="KW-0597">Phosphoprotein</keyword>
<keyword id="KW-1185">Reference proteome</keyword>
<keyword id="KW-0808">Transferase</keyword>
<gene>
    <name evidence="1" type="primary">cysC</name>
    <name type="ordered locus">CKL_1799</name>
</gene>
<protein>
    <recommendedName>
        <fullName evidence="1">Adenylyl-sulfate kinase</fullName>
        <ecNumber evidence="1">2.7.1.25</ecNumber>
    </recommendedName>
    <alternativeName>
        <fullName evidence="1">APS kinase</fullName>
    </alternativeName>
    <alternativeName>
        <fullName evidence="1">ATP adenosine-5'-phosphosulfate 3'-phosphotransferase</fullName>
    </alternativeName>
    <alternativeName>
        <fullName evidence="1">Adenosine-5'-phosphosulfate kinase</fullName>
    </alternativeName>
</protein>
<name>CYSC_CLOK5</name>
<reference key="1">
    <citation type="journal article" date="2008" name="Proc. Natl. Acad. Sci. U.S.A.">
        <title>The genome of Clostridium kluyveri, a strict anaerobe with unique metabolic features.</title>
        <authorList>
            <person name="Seedorf H."/>
            <person name="Fricke W.F."/>
            <person name="Veith B."/>
            <person name="Brueggemann H."/>
            <person name="Liesegang H."/>
            <person name="Strittmatter A."/>
            <person name="Miethke M."/>
            <person name="Buckel W."/>
            <person name="Hinderberger J."/>
            <person name="Li F."/>
            <person name="Hagemeier C."/>
            <person name="Thauer R.K."/>
            <person name="Gottschalk G."/>
        </authorList>
    </citation>
    <scope>NUCLEOTIDE SEQUENCE [LARGE SCALE GENOMIC DNA]</scope>
    <source>
        <strain>ATCC 8527 / DSM 555 / NBRC 12016 / NCIMB 10680 / K1</strain>
    </source>
</reference>
<proteinExistence type="inferred from homology"/>
<dbReference type="EC" id="2.7.1.25" evidence="1"/>
<dbReference type="EMBL" id="CP000673">
    <property type="protein sequence ID" value="EDK33841.1"/>
    <property type="molecule type" value="Genomic_DNA"/>
</dbReference>
<dbReference type="SMR" id="A5N960"/>
<dbReference type="STRING" id="431943.CKL_1799"/>
<dbReference type="KEGG" id="ckl:CKL_1799"/>
<dbReference type="eggNOG" id="COG0529">
    <property type="taxonomic scope" value="Bacteria"/>
</dbReference>
<dbReference type="HOGENOM" id="CLU_046932_1_0_9"/>
<dbReference type="UniPathway" id="UPA00140">
    <property type="reaction ID" value="UER00205"/>
</dbReference>
<dbReference type="Proteomes" id="UP000002411">
    <property type="component" value="Chromosome"/>
</dbReference>
<dbReference type="GO" id="GO:0004020">
    <property type="term" value="F:adenylylsulfate kinase activity"/>
    <property type="evidence" value="ECO:0007669"/>
    <property type="project" value="UniProtKB-UniRule"/>
</dbReference>
<dbReference type="GO" id="GO:0005524">
    <property type="term" value="F:ATP binding"/>
    <property type="evidence" value="ECO:0007669"/>
    <property type="project" value="UniProtKB-UniRule"/>
</dbReference>
<dbReference type="GO" id="GO:0070814">
    <property type="term" value="P:hydrogen sulfide biosynthetic process"/>
    <property type="evidence" value="ECO:0007669"/>
    <property type="project" value="UniProtKB-UniRule"/>
</dbReference>
<dbReference type="GO" id="GO:0000103">
    <property type="term" value="P:sulfate assimilation"/>
    <property type="evidence" value="ECO:0007669"/>
    <property type="project" value="UniProtKB-UniRule"/>
</dbReference>
<dbReference type="CDD" id="cd02027">
    <property type="entry name" value="APSK"/>
    <property type="match status" value="1"/>
</dbReference>
<dbReference type="FunFam" id="3.40.50.300:FF:000212">
    <property type="entry name" value="Adenylyl-sulfate kinase"/>
    <property type="match status" value="1"/>
</dbReference>
<dbReference type="Gene3D" id="3.40.50.300">
    <property type="entry name" value="P-loop containing nucleotide triphosphate hydrolases"/>
    <property type="match status" value="1"/>
</dbReference>
<dbReference type="HAMAP" id="MF_00065">
    <property type="entry name" value="Adenylyl_sulf_kinase"/>
    <property type="match status" value="1"/>
</dbReference>
<dbReference type="InterPro" id="IPR002891">
    <property type="entry name" value="APS_kinase"/>
</dbReference>
<dbReference type="InterPro" id="IPR027417">
    <property type="entry name" value="P-loop_NTPase"/>
</dbReference>
<dbReference type="NCBIfam" id="TIGR00455">
    <property type="entry name" value="apsK"/>
    <property type="match status" value="1"/>
</dbReference>
<dbReference type="NCBIfam" id="NF003013">
    <property type="entry name" value="PRK03846.1"/>
    <property type="match status" value="1"/>
</dbReference>
<dbReference type="NCBIfam" id="NF004041">
    <property type="entry name" value="PRK05541.1"/>
    <property type="match status" value="1"/>
</dbReference>
<dbReference type="PANTHER" id="PTHR11055">
    <property type="entry name" value="BIFUNCTIONAL 3'-PHOSPHOADENOSINE 5'-PHOSPHOSULFATE SYNTHASE"/>
    <property type="match status" value="1"/>
</dbReference>
<dbReference type="PANTHER" id="PTHR11055:SF1">
    <property type="entry name" value="PAPS SYNTHETASE, ISOFORM D"/>
    <property type="match status" value="1"/>
</dbReference>
<dbReference type="Pfam" id="PF01583">
    <property type="entry name" value="APS_kinase"/>
    <property type="match status" value="1"/>
</dbReference>
<dbReference type="SUPFAM" id="SSF52540">
    <property type="entry name" value="P-loop containing nucleoside triphosphate hydrolases"/>
    <property type="match status" value="1"/>
</dbReference>
<accession>A5N960</accession>
<sequence>MNVKSTNISWHRALVDREMREKLLGQNGILIWFTGLSGSGKSTIASELEMRLYNMGRLTYLLDGDNVRHGLNSNLGFTKEDRIENIRRTAEVCKLFVDSGIITISTFISPFKDDRDKVRKLLGKDFVEVYVDCPLEVCESRDPKGIYKKARNGEIKDFTGVDSPYEVPDNPEIVVSTNLDTVQQCVNKILDFLSCKVQE</sequence>
<evidence type="ECO:0000255" key="1">
    <source>
        <dbReference type="HAMAP-Rule" id="MF_00065"/>
    </source>
</evidence>
<feature type="chain" id="PRO_1000092238" description="Adenylyl-sulfate kinase">
    <location>
        <begin position="1"/>
        <end position="199"/>
    </location>
</feature>
<feature type="active site" description="Phosphoserine intermediate" evidence="1">
    <location>
        <position position="109"/>
    </location>
</feature>
<feature type="binding site" evidence="1">
    <location>
        <begin position="35"/>
        <end position="42"/>
    </location>
    <ligand>
        <name>ATP</name>
        <dbReference type="ChEBI" id="CHEBI:30616"/>
    </ligand>
</feature>
<organism>
    <name type="scientific">Clostridium kluyveri (strain ATCC 8527 / DSM 555 / NBRC 12016 / NCIMB 10680 / K1)</name>
    <dbReference type="NCBI Taxonomy" id="431943"/>
    <lineage>
        <taxon>Bacteria</taxon>
        <taxon>Bacillati</taxon>
        <taxon>Bacillota</taxon>
        <taxon>Clostridia</taxon>
        <taxon>Eubacteriales</taxon>
        <taxon>Clostridiaceae</taxon>
        <taxon>Clostridium</taxon>
    </lineage>
</organism>